<protein>
    <recommendedName>
        <fullName evidence="1">4-hydroxy-3-methylbut-2-enyl diphosphate reductase</fullName>
        <shortName evidence="1">HMBPP reductase</shortName>
        <ecNumber evidence="1">1.17.7.4</ecNumber>
    </recommendedName>
</protein>
<dbReference type="EC" id="1.17.7.4" evidence="1"/>
<dbReference type="EMBL" id="AP009179">
    <property type="protein sequence ID" value="BAF71508.1"/>
    <property type="molecule type" value="Genomic_DNA"/>
</dbReference>
<dbReference type="RefSeq" id="WP_011980241.1">
    <property type="nucleotide sequence ID" value="NC_009663.1"/>
</dbReference>
<dbReference type="SMR" id="A6Q7P9"/>
<dbReference type="STRING" id="387093.SUN_0548"/>
<dbReference type="KEGG" id="sun:SUN_0548"/>
<dbReference type="eggNOG" id="COG0761">
    <property type="taxonomic scope" value="Bacteria"/>
</dbReference>
<dbReference type="HOGENOM" id="CLU_027486_0_1_7"/>
<dbReference type="OrthoDB" id="9804068at2"/>
<dbReference type="UniPathway" id="UPA00056">
    <property type="reaction ID" value="UER00097"/>
</dbReference>
<dbReference type="UniPathway" id="UPA00059">
    <property type="reaction ID" value="UER00105"/>
</dbReference>
<dbReference type="Proteomes" id="UP000006378">
    <property type="component" value="Chromosome"/>
</dbReference>
<dbReference type="GO" id="GO:0051539">
    <property type="term" value="F:4 iron, 4 sulfur cluster binding"/>
    <property type="evidence" value="ECO:0007669"/>
    <property type="project" value="UniProtKB-UniRule"/>
</dbReference>
<dbReference type="GO" id="GO:0051745">
    <property type="term" value="F:4-hydroxy-3-methylbut-2-enyl diphosphate reductase activity"/>
    <property type="evidence" value="ECO:0007669"/>
    <property type="project" value="UniProtKB-UniRule"/>
</dbReference>
<dbReference type="GO" id="GO:0046872">
    <property type="term" value="F:metal ion binding"/>
    <property type="evidence" value="ECO:0007669"/>
    <property type="project" value="UniProtKB-KW"/>
</dbReference>
<dbReference type="GO" id="GO:0050992">
    <property type="term" value="P:dimethylallyl diphosphate biosynthetic process"/>
    <property type="evidence" value="ECO:0007669"/>
    <property type="project" value="UniProtKB-UniRule"/>
</dbReference>
<dbReference type="GO" id="GO:0019288">
    <property type="term" value="P:isopentenyl diphosphate biosynthetic process, methylerythritol 4-phosphate pathway"/>
    <property type="evidence" value="ECO:0007669"/>
    <property type="project" value="UniProtKB-UniRule"/>
</dbReference>
<dbReference type="GO" id="GO:0016114">
    <property type="term" value="P:terpenoid biosynthetic process"/>
    <property type="evidence" value="ECO:0007669"/>
    <property type="project" value="UniProtKB-UniRule"/>
</dbReference>
<dbReference type="CDD" id="cd13944">
    <property type="entry name" value="lytB_ispH"/>
    <property type="match status" value="1"/>
</dbReference>
<dbReference type="Gene3D" id="3.40.50.11270">
    <property type="match status" value="1"/>
</dbReference>
<dbReference type="Gene3D" id="3.40.1010.20">
    <property type="entry name" value="4-hydroxy-3-methylbut-2-enyl diphosphate reductase, catalytic domain"/>
    <property type="match status" value="2"/>
</dbReference>
<dbReference type="HAMAP" id="MF_00191">
    <property type="entry name" value="IspH"/>
    <property type="match status" value="1"/>
</dbReference>
<dbReference type="InterPro" id="IPR003451">
    <property type="entry name" value="LytB/IspH"/>
</dbReference>
<dbReference type="NCBIfam" id="TIGR00216">
    <property type="entry name" value="ispH_lytB"/>
    <property type="match status" value="1"/>
</dbReference>
<dbReference type="NCBIfam" id="NF002187">
    <property type="entry name" value="PRK01045.1-1"/>
    <property type="match status" value="1"/>
</dbReference>
<dbReference type="PANTHER" id="PTHR30426">
    <property type="entry name" value="4-HYDROXY-3-METHYLBUT-2-ENYL DIPHOSPHATE REDUCTASE"/>
    <property type="match status" value="1"/>
</dbReference>
<dbReference type="PANTHER" id="PTHR30426:SF0">
    <property type="entry name" value="4-HYDROXY-3-METHYLBUT-2-ENYL DIPHOSPHATE REDUCTASE"/>
    <property type="match status" value="1"/>
</dbReference>
<dbReference type="Pfam" id="PF02401">
    <property type="entry name" value="LYTB"/>
    <property type="match status" value="1"/>
</dbReference>
<name>ISPH_SULNB</name>
<organism>
    <name type="scientific">Sulfurovum sp. (strain NBC37-1)</name>
    <dbReference type="NCBI Taxonomy" id="387093"/>
    <lineage>
        <taxon>Bacteria</taxon>
        <taxon>Pseudomonadati</taxon>
        <taxon>Campylobacterota</taxon>
        <taxon>Epsilonproteobacteria</taxon>
        <taxon>Campylobacterales</taxon>
        <taxon>Sulfurovaceae</taxon>
        <taxon>Sulfurovum</taxon>
    </lineage>
</organism>
<sequence>MKIQLASSYGFCFGVKRAIKIAEEHQGSKTYGPLIHNKDEINRLKEGFDIGLAEKLDDVTPEDSVVIRTHGIPKDELSQLKAQENPIIDATCPYVTTPQNIVANMSEKGYSIVIFGDKEHPEIKGVVSYAKDLRNAFIVKHEDELKGLPILSKVAVVAQTTRKPEDFLKIVNALILNHKEVRVFNTICNATFENQDAAAELAKDADVMVVIGGKHSSNTKQLHSICKSYCDDSYLIENEAELEPKWFEGKKLCGISAGASTPDWIVQNVIDKIEALK</sequence>
<accession>A6Q7P9</accession>
<feature type="chain" id="PRO_1000021183" description="4-hydroxy-3-methylbut-2-enyl diphosphate reductase">
    <location>
        <begin position="1"/>
        <end position="277"/>
    </location>
</feature>
<feature type="active site" description="Proton donor" evidence="1">
    <location>
        <position position="122"/>
    </location>
</feature>
<feature type="binding site" evidence="1">
    <location>
        <position position="12"/>
    </location>
    <ligand>
        <name>[4Fe-4S] cluster</name>
        <dbReference type="ChEBI" id="CHEBI:49883"/>
    </ligand>
</feature>
<feature type="binding site" evidence="1">
    <location>
        <position position="36"/>
    </location>
    <ligand>
        <name>(2E)-4-hydroxy-3-methylbut-2-enyl diphosphate</name>
        <dbReference type="ChEBI" id="CHEBI:128753"/>
    </ligand>
</feature>
<feature type="binding site" evidence="1">
    <location>
        <position position="36"/>
    </location>
    <ligand>
        <name>dimethylallyl diphosphate</name>
        <dbReference type="ChEBI" id="CHEBI:57623"/>
    </ligand>
</feature>
<feature type="binding site" evidence="1">
    <location>
        <position position="36"/>
    </location>
    <ligand>
        <name>isopentenyl diphosphate</name>
        <dbReference type="ChEBI" id="CHEBI:128769"/>
    </ligand>
</feature>
<feature type="binding site" evidence="1">
    <location>
        <position position="70"/>
    </location>
    <ligand>
        <name>(2E)-4-hydroxy-3-methylbut-2-enyl diphosphate</name>
        <dbReference type="ChEBI" id="CHEBI:128753"/>
    </ligand>
</feature>
<feature type="binding site" evidence="1">
    <location>
        <position position="70"/>
    </location>
    <ligand>
        <name>dimethylallyl diphosphate</name>
        <dbReference type="ChEBI" id="CHEBI:57623"/>
    </ligand>
</feature>
<feature type="binding site" evidence="1">
    <location>
        <position position="70"/>
    </location>
    <ligand>
        <name>isopentenyl diphosphate</name>
        <dbReference type="ChEBI" id="CHEBI:128769"/>
    </ligand>
</feature>
<feature type="binding site" evidence="1">
    <location>
        <position position="92"/>
    </location>
    <ligand>
        <name>[4Fe-4S] cluster</name>
        <dbReference type="ChEBI" id="CHEBI:49883"/>
    </ligand>
</feature>
<feature type="binding site" evidence="1">
    <location>
        <position position="120"/>
    </location>
    <ligand>
        <name>(2E)-4-hydroxy-3-methylbut-2-enyl diphosphate</name>
        <dbReference type="ChEBI" id="CHEBI:128753"/>
    </ligand>
</feature>
<feature type="binding site" evidence="1">
    <location>
        <position position="120"/>
    </location>
    <ligand>
        <name>dimethylallyl diphosphate</name>
        <dbReference type="ChEBI" id="CHEBI:57623"/>
    </ligand>
</feature>
<feature type="binding site" evidence="1">
    <location>
        <position position="120"/>
    </location>
    <ligand>
        <name>isopentenyl diphosphate</name>
        <dbReference type="ChEBI" id="CHEBI:128769"/>
    </ligand>
</feature>
<feature type="binding site" evidence="1">
    <location>
        <position position="160"/>
    </location>
    <ligand>
        <name>(2E)-4-hydroxy-3-methylbut-2-enyl diphosphate</name>
        <dbReference type="ChEBI" id="CHEBI:128753"/>
    </ligand>
</feature>
<feature type="binding site" evidence="1">
    <location>
        <position position="188"/>
    </location>
    <ligand>
        <name>[4Fe-4S] cluster</name>
        <dbReference type="ChEBI" id="CHEBI:49883"/>
    </ligand>
</feature>
<feature type="binding site" evidence="1">
    <location>
        <position position="216"/>
    </location>
    <ligand>
        <name>(2E)-4-hydroxy-3-methylbut-2-enyl diphosphate</name>
        <dbReference type="ChEBI" id="CHEBI:128753"/>
    </ligand>
</feature>
<feature type="binding site" evidence="1">
    <location>
        <position position="216"/>
    </location>
    <ligand>
        <name>dimethylallyl diphosphate</name>
        <dbReference type="ChEBI" id="CHEBI:57623"/>
    </ligand>
</feature>
<feature type="binding site" evidence="1">
    <location>
        <position position="216"/>
    </location>
    <ligand>
        <name>isopentenyl diphosphate</name>
        <dbReference type="ChEBI" id="CHEBI:128769"/>
    </ligand>
</feature>
<feature type="binding site" evidence="1">
    <location>
        <position position="217"/>
    </location>
    <ligand>
        <name>(2E)-4-hydroxy-3-methylbut-2-enyl diphosphate</name>
        <dbReference type="ChEBI" id="CHEBI:128753"/>
    </ligand>
</feature>
<feature type="binding site" evidence="1">
    <location>
        <position position="217"/>
    </location>
    <ligand>
        <name>dimethylallyl diphosphate</name>
        <dbReference type="ChEBI" id="CHEBI:57623"/>
    </ligand>
</feature>
<feature type="binding site" evidence="1">
    <location>
        <position position="217"/>
    </location>
    <ligand>
        <name>isopentenyl diphosphate</name>
        <dbReference type="ChEBI" id="CHEBI:128769"/>
    </ligand>
</feature>
<feature type="binding site" evidence="1">
    <location>
        <position position="218"/>
    </location>
    <ligand>
        <name>(2E)-4-hydroxy-3-methylbut-2-enyl diphosphate</name>
        <dbReference type="ChEBI" id="CHEBI:128753"/>
    </ligand>
</feature>
<feature type="binding site" evidence="1">
    <location>
        <position position="218"/>
    </location>
    <ligand>
        <name>dimethylallyl diphosphate</name>
        <dbReference type="ChEBI" id="CHEBI:57623"/>
    </ligand>
</feature>
<feature type="binding site" evidence="1">
    <location>
        <position position="218"/>
    </location>
    <ligand>
        <name>isopentenyl diphosphate</name>
        <dbReference type="ChEBI" id="CHEBI:128769"/>
    </ligand>
</feature>
<feature type="binding site" evidence="1">
    <location>
        <position position="260"/>
    </location>
    <ligand>
        <name>(2E)-4-hydroxy-3-methylbut-2-enyl diphosphate</name>
        <dbReference type="ChEBI" id="CHEBI:128753"/>
    </ligand>
</feature>
<feature type="binding site" evidence="1">
    <location>
        <position position="260"/>
    </location>
    <ligand>
        <name>dimethylallyl diphosphate</name>
        <dbReference type="ChEBI" id="CHEBI:57623"/>
    </ligand>
</feature>
<feature type="binding site" evidence="1">
    <location>
        <position position="260"/>
    </location>
    <ligand>
        <name>isopentenyl diphosphate</name>
        <dbReference type="ChEBI" id="CHEBI:128769"/>
    </ligand>
</feature>
<gene>
    <name evidence="1" type="primary">ispH</name>
    <name type="ordered locus">SUN_0548</name>
</gene>
<reference key="1">
    <citation type="journal article" date="2007" name="Proc. Natl. Acad. Sci. U.S.A.">
        <title>Deep-sea vent epsilon-proteobacterial genomes provide insights into emergence of pathogens.</title>
        <authorList>
            <person name="Nakagawa S."/>
            <person name="Takaki Y."/>
            <person name="Shimamura S."/>
            <person name="Reysenbach A.-L."/>
            <person name="Takai K."/>
            <person name="Horikoshi K."/>
        </authorList>
    </citation>
    <scope>NUCLEOTIDE SEQUENCE [LARGE SCALE GENOMIC DNA]</scope>
    <source>
        <strain>NBC37-1</strain>
    </source>
</reference>
<proteinExistence type="inferred from homology"/>
<keyword id="KW-0004">4Fe-4S</keyword>
<keyword id="KW-0408">Iron</keyword>
<keyword id="KW-0411">Iron-sulfur</keyword>
<keyword id="KW-0414">Isoprene biosynthesis</keyword>
<keyword id="KW-0479">Metal-binding</keyword>
<keyword id="KW-0560">Oxidoreductase</keyword>
<comment type="function">
    <text evidence="1">Catalyzes the conversion of 1-hydroxy-2-methyl-2-(E)-butenyl 4-diphosphate (HMBPP) into a mixture of isopentenyl diphosphate (IPP) and dimethylallyl diphosphate (DMAPP). Acts in the terminal step of the DOXP/MEP pathway for isoprenoid precursor biosynthesis.</text>
</comment>
<comment type="catalytic activity">
    <reaction evidence="1">
        <text>isopentenyl diphosphate + 2 oxidized [2Fe-2S]-[ferredoxin] + H2O = (2E)-4-hydroxy-3-methylbut-2-enyl diphosphate + 2 reduced [2Fe-2S]-[ferredoxin] + 2 H(+)</text>
        <dbReference type="Rhea" id="RHEA:24488"/>
        <dbReference type="Rhea" id="RHEA-COMP:10000"/>
        <dbReference type="Rhea" id="RHEA-COMP:10001"/>
        <dbReference type="ChEBI" id="CHEBI:15377"/>
        <dbReference type="ChEBI" id="CHEBI:15378"/>
        <dbReference type="ChEBI" id="CHEBI:33737"/>
        <dbReference type="ChEBI" id="CHEBI:33738"/>
        <dbReference type="ChEBI" id="CHEBI:128753"/>
        <dbReference type="ChEBI" id="CHEBI:128769"/>
        <dbReference type="EC" id="1.17.7.4"/>
    </reaction>
</comment>
<comment type="catalytic activity">
    <reaction evidence="1">
        <text>dimethylallyl diphosphate + 2 oxidized [2Fe-2S]-[ferredoxin] + H2O = (2E)-4-hydroxy-3-methylbut-2-enyl diphosphate + 2 reduced [2Fe-2S]-[ferredoxin] + 2 H(+)</text>
        <dbReference type="Rhea" id="RHEA:24825"/>
        <dbReference type="Rhea" id="RHEA-COMP:10000"/>
        <dbReference type="Rhea" id="RHEA-COMP:10001"/>
        <dbReference type="ChEBI" id="CHEBI:15377"/>
        <dbReference type="ChEBI" id="CHEBI:15378"/>
        <dbReference type="ChEBI" id="CHEBI:33737"/>
        <dbReference type="ChEBI" id="CHEBI:33738"/>
        <dbReference type="ChEBI" id="CHEBI:57623"/>
        <dbReference type="ChEBI" id="CHEBI:128753"/>
        <dbReference type="EC" id="1.17.7.4"/>
    </reaction>
</comment>
<comment type="cofactor">
    <cofactor evidence="1">
        <name>[4Fe-4S] cluster</name>
        <dbReference type="ChEBI" id="CHEBI:49883"/>
    </cofactor>
    <text evidence="1">Binds 1 [4Fe-4S] cluster per subunit.</text>
</comment>
<comment type="pathway">
    <text evidence="1">Isoprenoid biosynthesis; dimethylallyl diphosphate biosynthesis; dimethylallyl diphosphate from (2E)-4-hydroxy-3-methylbutenyl diphosphate: step 1/1.</text>
</comment>
<comment type="pathway">
    <text evidence="1">Isoprenoid biosynthesis; isopentenyl diphosphate biosynthesis via DXP pathway; isopentenyl diphosphate from 1-deoxy-D-xylulose 5-phosphate: step 6/6.</text>
</comment>
<comment type="similarity">
    <text evidence="1">Belongs to the IspH family.</text>
</comment>
<evidence type="ECO:0000255" key="1">
    <source>
        <dbReference type="HAMAP-Rule" id="MF_00191"/>
    </source>
</evidence>